<proteinExistence type="evidence at transcript level"/>
<comment type="subcellular location">
    <subcellularLocation>
        <location evidence="1">Nucleus</location>
    </subcellularLocation>
</comment>
<feature type="chain" id="PRO_0000376973" description="B3 domain-containing protein Os06g0194400">
    <location>
        <begin position="1"/>
        <end position="237"/>
    </location>
</feature>
<feature type="DNA-binding region" description="TF-B3" evidence="1">
    <location>
        <begin position="139"/>
        <end position="230"/>
    </location>
</feature>
<feature type="region of interest" description="Disordered" evidence="2">
    <location>
        <begin position="1"/>
        <end position="23"/>
    </location>
</feature>
<feature type="region of interest" description="Disordered" evidence="2">
    <location>
        <begin position="38"/>
        <end position="82"/>
    </location>
</feature>
<feature type="sequence conflict" description="In Ref. 4; AK102980." evidence="3" ref="4">
    <original>F</original>
    <variation>L</variation>
    <location>
        <position position="89"/>
    </location>
</feature>
<gene>
    <name type="ordered locus">Os06g0194400</name>
    <name type="ordered locus">LOC_Os06g09420</name>
    <name type="ORF">P0648E08.15</name>
    <name type="ORF">P0698A06.41</name>
</gene>
<sequence length="237" mass="27559">MIEAESQMAEAASYEEQRRRQVEANKRKLEELRLHHLSAAVRESASKPSPVKQRKRKARALPGAGEDAPLRRSGRVANLPEKPKYRDEFQDFEKRIRRSYGGKRRDLSNRVYATDEQRDYAINAAQELEEELGSDYPIFVKPMLQSHVTGGFWLSLPTHFSRKYLPKRDETIRLVDEEDDEFDTLYLANKRGLSGGWRGFSIAHKLVDGDCLVFQLIQRTKFKVYIIRASSYYETDD</sequence>
<protein>
    <recommendedName>
        <fullName>B3 domain-containing protein Os06g0194400</fullName>
    </recommendedName>
</protein>
<keyword id="KW-0238">DNA-binding</keyword>
<keyword id="KW-0539">Nucleus</keyword>
<keyword id="KW-1185">Reference proteome</keyword>
<keyword id="KW-0804">Transcription</keyword>
<keyword id="KW-0805">Transcription regulation</keyword>
<accession>Q69V36</accession>
<accession>A0A0P0WTZ7</accession>
<evidence type="ECO:0000255" key="1">
    <source>
        <dbReference type="PROSITE-ProRule" id="PRU00326"/>
    </source>
</evidence>
<evidence type="ECO:0000256" key="2">
    <source>
        <dbReference type="SAM" id="MobiDB-lite"/>
    </source>
</evidence>
<evidence type="ECO:0000305" key="3"/>
<reference key="1">
    <citation type="journal article" date="2005" name="Nature">
        <title>The map-based sequence of the rice genome.</title>
        <authorList>
            <consortium name="International rice genome sequencing project (IRGSP)"/>
        </authorList>
    </citation>
    <scope>NUCLEOTIDE SEQUENCE [LARGE SCALE GENOMIC DNA]</scope>
    <source>
        <strain>cv. Nipponbare</strain>
    </source>
</reference>
<reference key="2">
    <citation type="journal article" date="2008" name="Nucleic Acids Res.">
        <title>The rice annotation project database (RAP-DB): 2008 update.</title>
        <authorList>
            <consortium name="The rice annotation project (RAP)"/>
        </authorList>
    </citation>
    <scope>GENOME REANNOTATION</scope>
    <source>
        <strain>cv. Nipponbare</strain>
    </source>
</reference>
<reference key="3">
    <citation type="journal article" date="2013" name="Rice">
        <title>Improvement of the Oryza sativa Nipponbare reference genome using next generation sequence and optical map data.</title>
        <authorList>
            <person name="Kawahara Y."/>
            <person name="de la Bastide M."/>
            <person name="Hamilton J.P."/>
            <person name="Kanamori H."/>
            <person name="McCombie W.R."/>
            <person name="Ouyang S."/>
            <person name="Schwartz D.C."/>
            <person name="Tanaka T."/>
            <person name="Wu J."/>
            <person name="Zhou S."/>
            <person name="Childs K.L."/>
            <person name="Davidson R.M."/>
            <person name="Lin H."/>
            <person name="Quesada-Ocampo L."/>
            <person name="Vaillancourt B."/>
            <person name="Sakai H."/>
            <person name="Lee S.S."/>
            <person name="Kim J."/>
            <person name="Numa H."/>
            <person name="Itoh T."/>
            <person name="Buell C.R."/>
            <person name="Matsumoto T."/>
        </authorList>
    </citation>
    <scope>GENOME REANNOTATION</scope>
    <source>
        <strain>cv. Nipponbare</strain>
    </source>
</reference>
<reference key="4">
    <citation type="journal article" date="2003" name="Science">
        <title>Collection, mapping, and annotation of over 28,000 cDNA clones from japonica rice.</title>
        <authorList>
            <consortium name="The rice full-length cDNA consortium"/>
        </authorList>
    </citation>
    <scope>NUCLEOTIDE SEQUENCE [LARGE SCALE MRNA]</scope>
    <source>
        <strain>cv. Nipponbare</strain>
    </source>
</reference>
<name>Y6944_ORYSJ</name>
<dbReference type="EMBL" id="AP003514">
    <property type="protein sequence ID" value="BAD35285.1"/>
    <property type="molecule type" value="Genomic_DNA"/>
</dbReference>
<dbReference type="EMBL" id="AP004280">
    <property type="protein sequence ID" value="BAD35642.1"/>
    <property type="molecule type" value="Genomic_DNA"/>
</dbReference>
<dbReference type="EMBL" id="AP008212">
    <property type="protein sequence ID" value="BAF18960.1"/>
    <property type="molecule type" value="Genomic_DNA"/>
</dbReference>
<dbReference type="EMBL" id="AP014962">
    <property type="protein sequence ID" value="BAS96602.1"/>
    <property type="molecule type" value="Genomic_DNA"/>
</dbReference>
<dbReference type="EMBL" id="AK102980">
    <property type="status" value="NOT_ANNOTATED_CDS"/>
    <property type="molecule type" value="mRNA"/>
</dbReference>
<dbReference type="RefSeq" id="XP_015642147.1">
    <property type="nucleotide sequence ID" value="XM_015786661.1"/>
</dbReference>
<dbReference type="SMR" id="Q69V36"/>
<dbReference type="FunCoup" id="Q69V36">
    <property type="interactions" value="1329"/>
</dbReference>
<dbReference type="PaxDb" id="39947-Q69V36"/>
<dbReference type="EnsemblPlants" id="Os06t0194400-01">
    <property type="protein sequence ID" value="Os06t0194400-01"/>
    <property type="gene ID" value="Os06g0194400"/>
</dbReference>
<dbReference type="Gramene" id="Os06t0194400-01">
    <property type="protein sequence ID" value="Os06t0194400-01"/>
    <property type="gene ID" value="Os06g0194400"/>
</dbReference>
<dbReference type="KEGG" id="dosa:Os06g0194400"/>
<dbReference type="eggNOG" id="KOG1216">
    <property type="taxonomic scope" value="Eukaryota"/>
</dbReference>
<dbReference type="HOGENOM" id="CLU_058918_1_0_1"/>
<dbReference type="InParanoid" id="Q69V36"/>
<dbReference type="OMA" id="IFRAREY"/>
<dbReference type="OrthoDB" id="1909330at2759"/>
<dbReference type="Proteomes" id="UP000000763">
    <property type="component" value="Chromosome 6"/>
</dbReference>
<dbReference type="Proteomes" id="UP000059680">
    <property type="component" value="Chromosome 6"/>
</dbReference>
<dbReference type="GO" id="GO:0005634">
    <property type="term" value="C:nucleus"/>
    <property type="evidence" value="ECO:0007669"/>
    <property type="project" value="UniProtKB-SubCell"/>
</dbReference>
<dbReference type="GO" id="GO:0003677">
    <property type="term" value="F:DNA binding"/>
    <property type="evidence" value="ECO:0007669"/>
    <property type="project" value="UniProtKB-KW"/>
</dbReference>
<dbReference type="CDD" id="cd10017">
    <property type="entry name" value="B3_DNA"/>
    <property type="match status" value="1"/>
</dbReference>
<dbReference type="Gene3D" id="2.40.330.10">
    <property type="entry name" value="DNA-binding pseudobarrel domain"/>
    <property type="match status" value="1"/>
</dbReference>
<dbReference type="InterPro" id="IPR003340">
    <property type="entry name" value="B3_DNA-bd"/>
</dbReference>
<dbReference type="InterPro" id="IPR015300">
    <property type="entry name" value="DNA-bd_pseudobarrel_sf"/>
</dbReference>
<dbReference type="InterPro" id="IPR044837">
    <property type="entry name" value="REM16-like"/>
</dbReference>
<dbReference type="PANTHER" id="PTHR31391:SF99">
    <property type="entry name" value="B3 DOMAIN-CONTAINING PROTEIN OS06G0194400"/>
    <property type="match status" value="1"/>
</dbReference>
<dbReference type="PANTHER" id="PTHR31391">
    <property type="entry name" value="B3 DOMAIN-CONTAINING PROTEIN OS11G0197600-RELATED"/>
    <property type="match status" value="1"/>
</dbReference>
<dbReference type="Pfam" id="PF02362">
    <property type="entry name" value="B3"/>
    <property type="match status" value="1"/>
</dbReference>
<dbReference type="SMART" id="SM01019">
    <property type="entry name" value="B3"/>
    <property type="match status" value="1"/>
</dbReference>
<dbReference type="SUPFAM" id="SSF101936">
    <property type="entry name" value="DNA-binding pseudobarrel domain"/>
    <property type="match status" value="1"/>
</dbReference>
<dbReference type="PROSITE" id="PS50863">
    <property type="entry name" value="B3"/>
    <property type="match status" value="1"/>
</dbReference>
<organism>
    <name type="scientific">Oryza sativa subsp. japonica</name>
    <name type="common">Rice</name>
    <dbReference type="NCBI Taxonomy" id="39947"/>
    <lineage>
        <taxon>Eukaryota</taxon>
        <taxon>Viridiplantae</taxon>
        <taxon>Streptophyta</taxon>
        <taxon>Embryophyta</taxon>
        <taxon>Tracheophyta</taxon>
        <taxon>Spermatophyta</taxon>
        <taxon>Magnoliopsida</taxon>
        <taxon>Liliopsida</taxon>
        <taxon>Poales</taxon>
        <taxon>Poaceae</taxon>
        <taxon>BOP clade</taxon>
        <taxon>Oryzoideae</taxon>
        <taxon>Oryzeae</taxon>
        <taxon>Oryzinae</taxon>
        <taxon>Oryza</taxon>
        <taxon>Oryza sativa</taxon>
    </lineage>
</organism>